<name>RS15_LACDB</name>
<organism>
    <name type="scientific">Lactobacillus delbrueckii subsp. bulgaricus (strain ATCC BAA-365 / Lb-18)</name>
    <dbReference type="NCBI Taxonomy" id="321956"/>
    <lineage>
        <taxon>Bacteria</taxon>
        <taxon>Bacillati</taxon>
        <taxon>Bacillota</taxon>
        <taxon>Bacilli</taxon>
        <taxon>Lactobacillales</taxon>
        <taxon>Lactobacillaceae</taxon>
        <taxon>Lactobacillus</taxon>
    </lineage>
</organism>
<reference key="1">
    <citation type="journal article" date="2006" name="Proc. Natl. Acad. Sci. U.S.A.">
        <title>Comparative genomics of the lactic acid bacteria.</title>
        <authorList>
            <person name="Makarova K.S."/>
            <person name="Slesarev A."/>
            <person name="Wolf Y.I."/>
            <person name="Sorokin A."/>
            <person name="Mirkin B."/>
            <person name="Koonin E.V."/>
            <person name="Pavlov A."/>
            <person name="Pavlova N."/>
            <person name="Karamychev V."/>
            <person name="Polouchine N."/>
            <person name="Shakhova V."/>
            <person name="Grigoriev I."/>
            <person name="Lou Y."/>
            <person name="Rohksar D."/>
            <person name="Lucas S."/>
            <person name="Huang K."/>
            <person name="Goodstein D.M."/>
            <person name="Hawkins T."/>
            <person name="Plengvidhya V."/>
            <person name="Welker D."/>
            <person name="Hughes J."/>
            <person name="Goh Y."/>
            <person name="Benson A."/>
            <person name="Baldwin K."/>
            <person name="Lee J.-H."/>
            <person name="Diaz-Muniz I."/>
            <person name="Dosti B."/>
            <person name="Smeianov V."/>
            <person name="Wechter W."/>
            <person name="Barabote R."/>
            <person name="Lorca G."/>
            <person name="Altermann E."/>
            <person name="Barrangou R."/>
            <person name="Ganesan B."/>
            <person name="Xie Y."/>
            <person name="Rawsthorne H."/>
            <person name="Tamir D."/>
            <person name="Parker C."/>
            <person name="Breidt F."/>
            <person name="Broadbent J.R."/>
            <person name="Hutkins R."/>
            <person name="O'Sullivan D."/>
            <person name="Steele J."/>
            <person name="Unlu G."/>
            <person name="Saier M.H. Jr."/>
            <person name="Klaenhammer T."/>
            <person name="Richardson P."/>
            <person name="Kozyavkin S."/>
            <person name="Weimer B.C."/>
            <person name="Mills D.A."/>
        </authorList>
    </citation>
    <scope>NUCLEOTIDE SEQUENCE [LARGE SCALE GENOMIC DNA]</scope>
    <source>
        <strain>ATCC BAA-365 / Lb-18</strain>
    </source>
</reference>
<keyword id="KW-0687">Ribonucleoprotein</keyword>
<keyword id="KW-0689">Ribosomal protein</keyword>
<keyword id="KW-0694">RNA-binding</keyword>
<keyword id="KW-0699">rRNA-binding</keyword>
<evidence type="ECO:0000255" key="1">
    <source>
        <dbReference type="HAMAP-Rule" id="MF_01343"/>
    </source>
</evidence>
<evidence type="ECO:0000305" key="2"/>
<gene>
    <name evidence="1" type="primary">rpsO</name>
    <name type="ordered locus">LBUL_0706</name>
</gene>
<comment type="function">
    <text evidence="1">One of the primary rRNA binding proteins, it binds directly to 16S rRNA where it helps nucleate assembly of the platform of the 30S subunit by binding and bridging several RNA helices of the 16S rRNA.</text>
</comment>
<comment type="function">
    <text evidence="1">Forms an intersubunit bridge (bridge B4) with the 23S rRNA of the 50S subunit in the ribosome.</text>
</comment>
<comment type="subunit">
    <text evidence="1">Part of the 30S ribosomal subunit. Forms a bridge to the 50S subunit in the 70S ribosome, contacting the 23S rRNA.</text>
</comment>
<comment type="similarity">
    <text evidence="1">Belongs to the universal ribosomal protein uS15 family.</text>
</comment>
<dbReference type="EMBL" id="CP000412">
    <property type="protein sequence ID" value="ABJ58332.1"/>
    <property type="molecule type" value="Genomic_DNA"/>
</dbReference>
<dbReference type="RefSeq" id="WP_002879084.1">
    <property type="nucleotide sequence ID" value="NC_008529.1"/>
</dbReference>
<dbReference type="SMR" id="Q04B40"/>
<dbReference type="GeneID" id="69668755"/>
<dbReference type="KEGG" id="lbu:LBUL_0706"/>
<dbReference type="HOGENOM" id="CLU_148518_0_0_9"/>
<dbReference type="BioCyc" id="LDEL321956:LBUL_RS03375-MONOMER"/>
<dbReference type="GO" id="GO:0022627">
    <property type="term" value="C:cytosolic small ribosomal subunit"/>
    <property type="evidence" value="ECO:0007669"/>
    <property type="project" value="TreeGrafter"/>
</dbReference>
<dbReference type="GO" id="GO:0019843">
    <property type="term" value="F:rRNA binding"/>
    <property type="evidence" value="ECO:0007669"/>
    <property type="project" value="UniProtKB-UniRule"/>
</dbReference>
<dbReference type="GO" id="GO:0003735">
    <property type="term" value="F:structural constituent of ribosome"/>
    <property type="evidence" value="ECO:0007669"/>
    <property type="project" value="InterPro"/>
</dbReference>
<dbReference type="GO" id="GO:0006412">
    <property type="term" value="P:translation"/>
    <property type="evidence" value="ECO:0007669"/>
    <property type="project" value="UniProtKB-UniRule"/>
</dbReference>
<dbReference type="CDD" id="cd00353">
    <property type="entry name" value="Ribosomal_S15p_S13e"/>
    <property type="match status" value="1"/>
</dbReference>
<dbReference type="FunFam" id="1.10.287.10:FF:000002">
    <property type="entry name" value="30S ribosomal protein S15"/>
    <property type="match status" value="1"/>
</dbReference>
<dbReference type="Gene3D" id="6.10.250.3130">
    <property type="match status" value="1"/>
</dbReference>
<dbReference type="Gene3D" id="1.10.287.10">
    <property type="entry name" value="S15/NS1, RNA-binding"/>
    <property type="match status" value="1"/>
</dbReference>
<dbReference type="HAMAP" id="MF_01343_B">
    <property type="entry name" value="Ribosomal_uS15_B"/>
    <property type="match status" value="1"/>
</dbReference>
<dbReference type="InterPro" id="IPR000589">
    <property type="entry name" value="Ribosomal_uS15"/>
</dbReference>
<dbReference type="InterPro" id="IPR005290">
    <property type="entry name" value="Ribosomal_uS15_bac-type"/>
</dbReference>
<dbReference type="InterPro" id="IPR009068">
    <property type="entry name" value="uS15_NS1_RNA-bd_sf"/>
</dbReference>
<dbReference type="NCBIfam" id="TIGR00952">
    <property type="entry name" value="S15_bact"/>
    <property type="match status" value="1"/>
</dbReference>
<dbReference type="PANTHER" id="PTHR23321">
    <property type="entry name" value="RIBOSOMAL PROTEIN S15, BACTERIAL AND ORGANELLAR"/>
    <property type="match status" value="1"/>
</dbReference>
<dbReference type="PANTHER" id="PTHR23321:SF26">
    <property type="entry name" value="SMALL RIBOSOMAL SUBUNIT PROTEIN US15M"/>
    <property type="match status" value="1"/>
</dbReference>
<dbReference type="Pfam" id="PF00312">
    <property type="entry name" value="Ribosomal_S15"/>
    <property type="match status" value="1"/>
</dbReference>
<dbReference type="SMART" id="SM01387">
    <property type="entry name" value="Ribosomal_S15"/>
    <property type="match status" value="1"/>
</dbReference>
<dbReference type="SUPFAM" id="SSF47060">
    <property type="entry name" value="S15/NS1 RNA-binding domain"/>
    <property type="match status" value="1"/>
</dbReference>
<proteinExistence type="inferred from homology"/>
<feature type="chain" id="PRO_1000054799" description="Small ribosomal subunit protein uS15">
    <location>
        <begin position="1"/>
        <end position="89"/>
    </location>
</feature>
<sequence>MAVSKERKNEIIKEYATHEGDTGSVEVQVAVLTEDINNLTQHMREHSHDHHSYVGLLKKIGHRRNLLRYLQENDLERYRALIARLGLRR</sequence>
<accession>Q04B40</accession>
<protein>
    <recommendedName>
        <fullName evidence="1">Small ribosomal subunit protein uS15</fullName>
    </recommendedName>
    <alternativeName>
        <fullName evidence="2">30S ribosomal protein S15</fullName>
    </alternativeName>
</protein>